<feature type="chain" id="PRO_0000082348" description="Taste receptor type 2 member 42">
    <location>
        <begin position="1"/>
        <end position="314"/>
    </location>
</feature>
<feature type="topological domain" description="Extracellular" evidence="2">
    <location>
        <begin position="1"/>
        <end position="7"/>
    </location>
</feature>
<feature type="transmembrane region" description="Helical; Name=1" evidence="2">
    <location>
        <begin position="8"/>
        <end position="28"/>
    </location>
</feature>
<feature type="topological domain" description="Cytoplasmic" evidence="2">
    <location>
        <begin position="29"/>
        <end position="50"/>
    </location>
</feature>
<feature type="transmembrane region" description="Helical; Name=2" evidence="2">
    <location>
        <begin position="51"/>
        <end position="71"/>
    </location>
</feature>
<feature type="topological domain" description="Extracellular" evidence="2">
    <location>
        <begin position="72"/>
        <end position="101"/>
    </location>
</feature>
<feature type="transmembrane region" description="Helical; Name=4" evidence="2">
    <location>
        <begin position="102"/>
        <end position="122"/>
    </location>
</feature>
<feature type="topological domain" description="Cytoplasmic" evidence="2">
    <location>
        <begin position="123"/>
        <end position="127"/>
    </location>
</feature>
<feature type="transmembrane region" description="Helical; Name=3" evidence="2">
    <location>
        <begin position="128"/>
        <end position="148"/>
    </location>
</feature>
<feature type="topological domain" description="Extracellular" evidence="2">
    <location>
        <begin position="149"/>
        <end position="187"/>
    </location>
</feature>
<feature type="transmembrane region" description="Helical; Name=5" evidence="2">
    <location>
        <begin position="188"/>
        <end position="208"/>
    </location>
</feature>
<feature type="topological domain" description="Cytoplasmic" evidence="2">
    <location>
        <begin position="209"/>
        <end position="238"/>
    </location>
</feature>
<feature type="transmembrane region" description="Helical; Name=6" evidence="2">
    <location>
        <begin position="239"/>
        <end position="259"/>
    </location>
</feature>
<feature type="topological domain" description="Extracellular" evidence="2">
    <location>
        <begin position="260"/>
        <end position="265"/>
    </location>
</feature>
<feature type="transmembrane region" description="Helical; Name=7" evidence="2">
    <location>
        <begin position="266"/>
        <end position="286"/>
    </location>
</feature>
<feature type="topological domain" description="Cytoplasmic" evidence="2">
    <location>
        <begin position="287"/>
        <end position="314"/>
    </location>
</feature>
<feature type="glycosylation site" description="N-linked (GlcNAc...) asparagine" evidence="2">
    <location>
        <position position="163"/>
    </location>
</feature>
<reference key="1">
    <citation type="journal article" date="2005" name="Mol. Biol. Evol.">
        <title>Evolution of bitter taste receptors in humans and apes.</title>
        <authorList>
            <person name="Fischer A."/>
            <person name="Gilad Y."/>
            <person name="Man O."/>
            <person name="Paeaebo S."/>
        </authorList>
    </citation>
    <scope>NUCLEOTIDE SEQUENCE [GENOMIC DNA]</scope>
</reference>
<protein>
    <recommendedName>
        <fullName>Taste receptor type 2 member 42</fullName>
        <shortName>T2R42</shortName>
    </recommendedName>
    <alternativeName>
        <fullName>T2R55</fullName>
    </alternativeName>
</protein>
<sequence length="314" mass="36151">MATELDKIFLTLAIVEFIIGMLGNVFIGLANCSEGIKNQKVFSVDFILTCLAISTIGHLLVILFDSHVAGLAPHLYATDRVVRPVTVLWHMTNHLTTWLATCLSIFYFFKIAHFPHSLFLWLRWRMNRVIAILLTLSLFLLIFDCLVLEMFIDISLNIIDKSNLTLYLDESKTPYDKLFLLKTLLSLNSFIPFSLCLTSLLFLFLSLVRHTRNLKLSSLGSRDSSTEAHRRAMKMVMSFLFLFIVHFFSLQVANWTFCILGNNKYTQFVMLALHAFPSCHSFILILGNSKLRQTAVRLLWHLRNYTKRPNPLPL</sequence>
<dbReference type="EMBL" id="AY724818">
    <property type="protein sequence ID" value="AAU21056.1"/>
    <property type="molecule type" value="Genomic_DNA"/>
</dbReference>
<dbReference type="SMR" id="Q646G3"/>
<dbReference type="GlyCosmos" id="Q646G3">
    <property type="glycosylation" value="1 site, No reported glycans"/>
</dbReference>
<dbReference type="GO" id="GO:0005886">
    <property type="term" value="C:plasma membrane"/>
    <property type="evidence" value="ECO:0007669"/>
    <property type="project" value="UniProtKB-ARBA"/>
</dbReference>
<dbReference type="GO" id="GO:0033038">
    <property type="term" value="F:bitter taste receptor activity"/>
    <property type="evidence" value="ECO:0007669"/>
    <property type="project" value="InterPro"/>
</dbReference>
<dbReference type="GO" id="GO:0004930">
    <property type="term" value="F:G protein-coupled receptor activity"/>
    <property type="evidence" value="ECO:0007669"/>
    <property type="project" value="UniProtKB-KW"/>
</dbReference>
<dbReference type="CDD" id="cd15024">
    <property type="entry name" value="7tm_TAS2R42"/>
    <property type="match status" value="1"/>
</dbReference>
<dbReference type="FunFam" id="1.20.1070.10:FF:000042">
    <property type="entry name" value="Taste receptor type 2 member 7"/>
    <property type="match status" value="1"/>
</dbReference>
<dbReference type="Gene3D" id="1.20.1070.10">
    <property type="entry name" value="Rhodopsin 7-helix transmembrane proteins"/>
    <property type="match status" value="1"/>
</dbReference>
<dbReference type="InterPro" id="IPR007960">
    <property type="entry name" value="TAS2R"/>
</dbReference>
<dbReference type="PANTHER" id="PTHR11394">
    <property type="entry name" value="TASTE RECEPTOR TYPE 2"/>
    <property type="match status" value="1"/>
</dbReference>
<dbReference type="PANTHER" id="PTHR11394:SF70">
    <property type="entry name" value="TASTE RECEPTOR TYPE 2 MEMBER 42"/>
    <property type="match status" value="1"/>
</dbReference>
<dbReference type="Pfam" id="PF05296">
    <property type="entry name" value="TAS2R"/>
    <property type="match status" value="1"/>
</dbReference>
<dbReference type="SUPFAM" id="SSF81321">
    <property type="entry name" value="Family A G protein-coupled receptor-like"/>
    <property type="match status" value="1"/>
</dbReference>
<gene>
    <name type="primary">TAS2R42</name>
    <name type="synonym">TAS2R55</name>
</gene>
<name>T2R42_PAPHA</name>
<evidence type="ECO:0000250" key="1"/>
<evidence type="ECO:0000255" key="2"/>
<evidence type="ECO:0000305" key="3"/>
<organism>
    <name type="scientific">Papio hamadryas</name>
    <name type="common">Hamadryas baboon</name>
    <dbReference type="NCBI Taxonomy" id="9557"/>
    <lineage>
        <taxon>Eukaryota</taxon>
        <taxon>Metazoa</taxon>
        <taxon>Chordata</taxon>
        <taxon>Craniata</taxon>
        <taxon>Vertebrata</taxon>
        <taxon>Euteleostomi</taxon>
        <taxon>Mammalia</taxon>
        <taxon>Eutheria</taxon>
        <taxon>Euarchontoglires</taxon>
        <taxon>Primates</taxon>
        <taxon>Haplorrhini</taxon>
        <taxon>Catarrhini</taxon>
        <taxon>Cercopithecidae</taxon>
        <taxon>Cercopithecinae</taxon>
        <taxon>Papio</taxon>
    </lineage>
</organism>
<proteinExistence type="inferred from homology"/>
<accession>Q646G3</accession>
<keyword id="KW-0297">G-protein coupled receptor</keyword>
<keyword id="KW-0325">Glycoprotein</keyword>
<keyword id="KW-0472">Membrane</keyword>
<keyword id="KW-0675">Receptor</keyword>
<keyword id="KW-0716">Sensory transduction</keyword>
<keyword id="KW-0919">Taste</keyword>
<keyword id="KW-0807">Transducer</keyword>
<keyword id="KW-0812">Transmembrane</keyword>
<keyword id="KW-1133">Transmembrane helix</keyword>
<comment type="function">
    <text evidence="1">Receptor that may play a role in the perception of bitterness and is gustducin-linked. May play a role in sensing the chemical composition of the gastrointestinal content. The activity of this receptor may stimulate alpha gustducin, mediate PLC-beta-2 activation and lead to the gating of TRPM5 (By similarity).</text>
</comment>
<comment type="subcellular location">
    <subcellularLocation>
        <location>Membrane</location>
        <topology>Multi-pass membrane protein</topology>
    </subcellularLocation>
</comment>
<comment type="miscellaneous">
    <text>Most taste cells may be activated by a limited number of bitter compounds; individual taste cells can discriminate among bitter stimuli.</text>
</comment>
<comment type="similarity">
    <text evidence="3">Belongs to the G-protein coupled receptor T2R family.</text>
</comment>